<comment type="function">
    <text evidence="1">Promotes spermatogenesis and ovulation by stimulating the testes and ovaries to synthesize steroids.</text>
</comment>
<comment type="subunit">
    <text evidence="1">Heterodimer of a common alpha chain and a unique beta chain which confers biological specificity to thyrotropin, lutropin, follitropin and gonadotropin.</text>
</comment>
<comment type="subcellular location">
    <subcellularLocation>
        <location>Secreted</location>
    </subcellularLocation>
</comment>
<comment type="similarity">
    <text evidence="4">Belongs to the glycoprotein hormones subunit beta family.</text>
</comment>
<proteinExistence type="evidence at transcript level"/>
<evidence type="ECO:0000250" key="1"/>
<evidence type="ECO:0000255" key="2"/>
<evidence type="ECO:0000269" key="3">
    <source>
    </source>
</evidence>
<evidence type="ECO:0000305" key="4"/>
<accession>Q6EV78</accession>
<organism>
    <name type="scientific">Macaca fascicularis</name>
    <name type="common">Crab-eating macaque</name>
    <name type="synonym">Cynomolgus monkey</name>
    <dbReference type="NCBI Taxonomy" id="9541"/>
    <lineage>
        <taxon>Eukaryota</taxon>
        <taxon>Metazoa</taxon>
        <taxon>Chordata</taxon>
        <taxon>Craniata</taxon>
        <taxon>Vertebrata</taxon>
        <taxon>Euteleostomi</taxon>
        <taxon>Mammalia</taxon>
        <taxon>Eutheria</taxon>
        <taxon>Euarchontoglires</taxon>
        <taxon>Primates</taxon>
        <taxon>Haplorrhini</taxon>
        <taxon>Catarrhini</taxon>
        <taxon>Cercopithecidae</taxon>
        <taxon>Cercopithecinae</taxon>
        <taxon>Macaca</taxon>
    </lineage>
</organism>
<keyword id="KW-1015">Disulfide bond</keyword>
<keyword id="KW-0325">Glycoprotein</keyword>
<keyword id="KW-0372">Hormone</keyword>
<keyword id="KW-1185">Reference proteome</keyword>
<keyword id="KW-0964">Secreted</keyword>
<keyword id="KW-0732">Signal</keyword>
<feature type="signal peptide" evidence="1">
    <location>
        <begin position="1"/>
        <end position="20"/>
    </location>
</feature>
<feature type="chain" id="PRO_0000011727" description="Lutropin subunit beta">
    <location>
        <begin position="21"/>
        <end position="141"/>
    </location>
</feature>
<feature type="glycosylation site" description="N-linked (GlcNAc...) asparagine" evidence="2">
    <location>
        <position position="33"/>
    </location>
</feature>
<feature type="glycosylation site" description="N-linked (GlcNAc...) asparagine" evidence="2">
    <location>
        <position position="50"/>
    </location>
</feature>
<feature type="disulfide bond" evidence="1">
    <location>
        <begin position="29"/>
        <end position="77"/>
    </location>
</feature>
<feature type="disulfide bond" evidence="1">
    <location>
        <begin position="43"/>
        <end position="92"/>
    </location>
</feature>
<feature type="disulfide bond" evidence="1">
    <location>
        <begin position="46"/>
        <end position="130"/>
    </location>
</feature>
<feature type="disulfide bond" evidence="1">
    <location>
        <begin position="54"/>
        <end position="108"/>
    </location>
</feature>
<feature type="disulfide bond" evidence="1">
    <location>
        <begin position="58"/>
        <end position="110"/>
    </location>
</feature>
<feature type="disulfide bond" evidence="1">
    <location>
        <begin position="113"/>
        <end position="120"/>
    </location>
</feature>
<feature type="sequence variant" evidence="3">
    <original>S</original>
    <variation>T</variation>
    <location>
        <position position="52"/>
    </location>
</feature>
<feature type="sequence variant" evidence="3">
    <original>H</original>
    <variation>R</variation>
    <location>
        <position position="80"/>
    </location>
</feature>
<gene>
    <name type="primary">LHB</name>
</gene>
<protein>
    <recommendedName>
        <fullName>Lutropin subunit beta</fullName>
        <shortName>Lutropin beta chain</shortName>
    </recommendedName>
    <alternativeName>
        <fullName>Luteinizing hormone subunit beta</fullName>
        <shortName>LH-B</shortName>
        <shortName>LSH-B</shortName>
        <shortName>LSH-beta</shortName>
    </alternativeName>
</protein>
<reference key="1">
    <citation type="journal article" date="1999" name="Mol. Cell. Endocrinol.">
        <title>Cloning and expression of cynomolgus monkey (Macaca fascicularis) gonadotropins luteinizing hormone and follicle-stimulating hormone and identification of two polymorphic sites in the luteinizing hormone beta subunit.</title>
        <authorList>
            <person name="Schmidt A."/>
            <person name="Gromoll J."/>
            <person name="Weinbauer G.F."/>
            <person name="Galla H.J."/>
            <person name="Chappel S."/>
            <person name="Simoni M."/>
        </authorList>
    </citation>
    <scope>NUCLEOTIDE SEQUENCE [MRNA]</scope>
    <scope>VARIANTS THR-52 AND ARG-80</scope>
    <source>
        <tissue>Pituitary</tissue>
    </source>
</reference>
<name>LSHB_MACFA</name>
<dbReference type="EMBL" id="AJ781396">
    <property type="protein sequence ID" value="CAH03730.1"/>
    <property type="molecule type" value="mRNA"/>
</dbReference>
<dbReference type="RefSeq" id="NP_001270790.1">
    <property type="nucleotide sequence ID" value="NM_001283861.1"/>
</dbReference>
<dbReference type="RefSeq" id="XP_045235093.1">
    <property type="nucleotide sequence ID" value="XM_045379158.2"/>
</dbReference>
<dbReference type="SMR" id="Q6EV78"/>
<dbReference type="STRING" id="9541.ENSMFAP00000032423"/>
<dbReference type="GlyCosmos" id="Q6EV78">
    <property type="glycosylation" value="2 sites, No reported glycans"/>
</dbReference>
<dbReference type="GeneID" id="102135912"/>
<dbReference type="VEuPathDB" id="HostDB:ENSMFAG00000002784"/>
<dbReference type="eggNOG" id="ENOG502S49V">
    <property type="taxonomic scope" value="Eukaryota"/>
</dbReference>
<dbReference type="OMA" id="CTYRDFY"/>
<dbReference type="Proteomes" id="UP000233100">
    <property type="component" value="Chromosome 19"/>
</dbReference>
<dbReference type="GO" id="GO:0005737">
    <property type="term" value="C:cytoplasm"/>
    <property type="evidence" value="ECO:0007669"/>
    <property type="project" value="TreeGrafter"/>
</dbReference>
<dbReference type="GO" id="GO:0005615">
    <property type="term" value="C:extracellular space"/>
    <property type="evidence" value="ECO:0007669"/>
    <property type="project" value="TreeGrafter"/>
</dbReference>
<dbReference type="GO" id="GO:0005179">
    <property type="term" value="F:hormone activity"/>
    <property type="evidence" value="ECO:0007669"/>
    <property type="project" value="UniProtKB-KW"/>
</dbReference>
<dbReference type="GO" id="GO:0007186">
    <property type="term" value="P:G protein-coupled receptor signaling pathway"/>
    <property type="evidence" value="ECO:0007669"/>
    <property type="project" value="TreeGrafter"/>
</dbReference>
<dbReference type="CDD" id="cd00069">
    <property type="entry name" value="GHB_like"/>
    <property type="match status" value="1"/>
</dbReference>
<dbReference type="FunFam" id="2.10.90.10:FF:000007">
    <property type="entry name" value="Luteinizing hormone beta subunit"/>
    <property type="match status" value="1"/>
</dbReference>
<dbReference type="Gene3D" id="2.10.90.10">
    <property type="entry name" value="Cystine-knot cytokines"/>
    <property type="match status" value="1"/>
</dbReference>
<dbReference type="InterPro" id="IPR029034">
    <property type="entry name" value="Cystine-knot_cytokine"/>
</dbReference>
<dbReference type="InterPro" id="IPR006208">
    <property type="entry name" value="Glyco_hormone_CN"/>
</dbReference>
<dbReference type="InterPro" id="IPR001545">
    <property type="entry name" value="Gonadotropin_bsu"/>
</dbReference>
<dbReference type="InterPro" id="IPR018245">
    <property type="entry name" value="Gonadotropin_bsu_CS"/>
</dbReference>
<dbReference type="PANTHER" id="PTHR11515">
    <property type="entry name" value="GLYCOPROTEIN HORMONE BETA CHAIN"/>
    <property type="match status" value="1"/>
</dbReference>
<dbReference type="PANTHER" id="PTHR11515:SF11">
    <property type="entry name" value="LUTROPIN SUBUNIT BETA"/>
    <property type="match status" value="1"/>
</dbReference>
<dbReference type="Pfam" id="PF00007">
    <property type="entry name" value="Cys_knot"/>
    <property type="match status" value="1"/>
</dbReference>
<dbReference type="SMART" id="SM00068">
    <property type="entry name" value="GHB"/>
    <property type="match status" value="1"/>
</dbReference>
<dbReference type="SUPFAM" id="SSF57501">
    <property type="entry name" value="Cystine-knot cytokines"/>
    <property type="match status" value="1"/>
</dbReference>
<dbReference type="PROSITE" id="PS00261">
    <property type="entry name" value="GLYCO_HORMONE_BETA_1"/>
    <property type="match status" value="1"/>
</dbReference>
<dbReference type="PROSITE" id="PS00689">
    <property type="entry name" value="GLYCO_HORMONE_BETA_2"/>
    <property type="match status" value="1"/>
</dbReference>
<sequence>MEMLQGLLLWLLLSMGGARASREPLRPLCRPINATLAAEKEACPVCITVNTSICAGYCPTMMRVLQAALLPLPQVVCTYHEVRFDSIQLPGCLPGVDPVVSFPVALSCRCGPCHRSTSDCGGPKDHPLTCDHPQLPGLLFL</sequence>